<proteinExistence type="inferred from homology"/>
<reference key="1">
    <citation type="journal article" date="2003" name="Nature">
        <title>Genome divergence in two Prochlorococcus ecotypes reflects oceanic niche differentiation.</title>
        <authorList>
            <person name="Rocap G."/>
            <person name="Larimer F.W."/>
            <person name="Lamerdin J.E."/>
            <person name="Malfatti S."/>
            <person name="Chain P."/>
            <person name="Ahlgren N.A."/>
            <person name="Arellano A."/>
            <person name="Coleman M."/>
            <person name="Hauser L."/>
            <person name="Hess W.R."/>
            <person name="Johnson Z.I."/>
            <person name="Land M.L."/>
            <person name="Lindell D."/>
            <person name="Post A.F."/>
            <person name="Regala W."/>
            <person name="Shah M."/>
            <person name="Shaw S.L."/>
            <person name="Steglich C."/>
            <person name="Sullivan M.B."/>
            <person name="Ting C.S."/>
            <person name="Tolonen A."/>
            <person name="Webb E.A."/>
            <person name="Zinser E.R."/>
            <person name="Chisholm S.W."/>
        </authorList>
    </citation>
    <scope>NUCLEOTIDE SEQUENCE [LARGE SCALE GENOMIC DNA]</scope>
    <source>
        <strain>MIT 9313</strain>
    </source>
</reference>
<keyword id="KW-0963">Cytoplasm</keyword>
<keyword id="KW-0312">Gluconeogenesis</keyword>
<keyword id="KW-0324">Glycolysis</keyword>
<keyword id="KW-0413">Isomerase</keyword>
<keyword id="KW-1185">Reference proteome</keyword>
<protein>
    <recommendedName>
        <fullName evidence="1">Triosephosphate isomerase</fullName>
        <shortName evidence="1">TIM</shortName>
        <shortName evidence="1">TPI</shortName>
        <ecNumber evidence="1">5.3.1.1</ecNumber>
    </recommendedName>
    <alternativeName>
        <fullName evidence="1">Triose-phosphate isomerase</fullName>
    </alternativeName>
</protein>
<evidence type="ECO:0000255" key="1">
    <source>
        <dbReference type="HAMAP-Rule" id="MF_00147"/>
    </source>
</evidence>
<gene>
    <name evidence="1" type="primary">tpiA</name>
    <name type="synonym">tpi</name>
    <name type="ordered locus">PMT_0817</name>
</gene>
<feature type="chain" id="PRO_0000090266" description="Triosephosphate isomerase">
    <location>
        <begin position="1"/>
        <end position="243"/>
    </location>
</feature>
<feature type="active site" description="Electrophile" evidence="1">
    <location>
        <position position="96"/>
    </location>
</feature>
<feature type="active site" description="Proton acceptor" evidence="1">
    <location>
        <position position="165"/>
    </location>
</feature>
<feature type="binding site" evidence="1">
    <location>
        <begin position="9"/>
        <end position="11"/>
    </location>
    <ligand>
        <name>substrate</name>
    </ligand>
</feature>
<feature type="binding site" evidence="1">
    <location>
        <position position="171"/>
    </location>
    <ligand>
        <name>substrate</name>
    </ligand>
</feature>
<feature type="binding site" evidence="1">
    <location>
        <position position="204"/>
    </location>
    <ligand>
        <name>substrate</name>
    </ligand>
</feature>
<feature type="binding site" evidence="1">
    <location>
        <begin position="225"/>
        <end position="226"/>
    </location>
    <ligand>
        <name>substrate</name>
    </ligand>
</feature>
<organism>
    <name type="scientific">Prochlorococcus marinus (strain MIT 9313)</name>
    <dbReference type="NCBI Taxonomy" id="74547"/>
    <lineage>
        <taxon>Bacteria</taxon>
        <taxon>Bacillati</taxon>
        <taxon>Cyanobacteriota</taxon>
        <taxon>Cyanophyceae</taxon>
        <taxon>Synechococcales</taxon>
        <taxon>Prochlorococcaceae</taxon>
        <taxon>Prochlorococcus</taxon>
    </lineage>
</organism>
<sequence>MRKPVIAGNWKMHMTCAQAREYTAMFLPLIEATPNDRHVVIAPPFTAISSMAESVGGTRLELSSQNVHWEDDGAYTAEVSPTMLLEHQVRYAIVGHSEPRKYFSESDEQINRRARSAQAHGLIPIVCVGESDEQRERGEAERVIRRQVEQGLEDTDPDKLVVAYEPIWAIGTGKTCEASEANRICGLIRRWVGASELIIQYGGSVKPGNIDELMAMSDIDGVLVGGASLDPESFARIANYQTS</sequence>
<accession>Q7V7D2</accession>
<comment type="function">
    <text evidence="1">Involved in the gluconeogenesis. Catalyzes stereospecifically the conversion of dihydroxyacetone phosphate (DHAP) to D-glyceraldehyde-3-phosphate (G3P).</text>
</comment>
<comment type="catalytic activity">
    <reaction evidence="1">
        <text>D-glyceraldehyde 3-phosphate = dihydroxyacetone phosphate</text>
        <dbReference type="Rhea" id="RHEA:18585"/>
        <dbReference type="ChEBI" id="CHEBI:57642"/>
        <dbReference type="ChEBI" id="CHEBI:59776"/>
        <dbReference type="EC" id="5.3.1.1"/>
    </reaction>
</comment>
<comment type="pathway">
    <text evidence="1">Carbohydrate biosynthesis; gluconeogenesis.</text>
</comment>
<comment type="pathway">
    <text evidence="1">Carbohydrate degradation; glycolysis; D-glyceraldehyde 3-phosphate from glycerone phosphate: step 1/1.</text>
</comment>
<comment type="subunit">
    <text evidence="1">Homodimer.</text>
</comment>
<comment type="subcellular location">
    <subcellularLocation>
        <location evidence="1">Cytoplasm</location>
    </subcellularLocation>
</comment>
<comment type="similarity">
    <text evidence="1">Belongs to the triosephosphate isomerase family.</text>
</comment>
<name>TPIS_PROMM</name>
<dbReference type="EC" id="5.3.1.1" evidence="1"/>
<dbReference type="EMBL" id="BX548175">
    <property type="protein sequence ID" value="CAE20992.1"/>
    <property type="molecule type" value="Genomic_DNA"/>
</dbReference>
<dbReference type="RefSeq" id="WP_011130195.1">
    <property type="nucleotide sequence ID" value="NC_005071.1"/>
</dbReference>
<dbReference type="SMR" id="Q7V7D2"/>
<dbReference type="KEGG" id="pmt:PMT_0817"/>
<dbReference type="eggNOG" id="COG0149">
    <property type="taxonomic scope" value="Bacteria"/>
</dbReference>
<dbReference type="HOGENOM" id="CLU_024251_2_3_3"/>
<dbReference type="OrthoDB" id="9809429at2"/>
<dbReference type="UniPathway" id="UPA00109">
    <property type="reaction ID" value="UER00189"/>
</dbReference>
<dbReference type="UniPathway" id="UPA00138"/>
<dbReference type="Proteomes" id="UP000001423">
    <property type="component" value="Chromosome"/>
</dbReference>
<dbReference type="GO" id="GO:0005829">
    <property type="term" value="C:cytosol"/>
    <property type="evidence" value="ECO:0007669"/>
    <property type="project" value="TreeGrafter"/>
</dbReference>
<dbReference type="GO" id="GO:0004807">
    <property type="term" value="F:triose-phosphate isomerase activity"/>
    <property type="evidence" value="ECO:0007669"/>
    <property type="project" value="UniProtKB-UniRule"/>
</dbReference>
<dbReference type="GO" id="GO:0006094">
    <property type="term" value="P:gluconeogenesis"/>
    <property type="evidence" value="ECO:0007669"/>
    <property type="project" value="UniProtKB-UniRule"/>
</dbReference>
<dbReference type="GO" id="GO:0046166">
    <property type="term" value="P:glyceraldehyde-3-phosphate biosynthetic process"/>
    <property type="evidence" value="ECO:0007669"/>
    <property type="project" value="TreeGrafter"/>
</dbReference>
<dbReference type="GO" id="GO:0019563">
    <property type="term" value="P:glycerol catabolic process"/>
    <property type="evidence" value="ECO:0007669"/>
    <property type="project" value="TreeGrafter"/>
</dbReference>
<dbReference type="GO" id="GO:0006096">
    <property type="term" value="P:glycolytic process"/>
    <property type="evidence" value="ECO:0007669"/>
    <property type="project" value="UniProtKB-UniRule"/>
</dbReference>
<dbReference type="CDD" id="cd00311">
    <property type="entry name" value="TIM"/>
    <property type="match status" value="1"/>
</dbReference>
<dbReference type="FunFam" id="3.20.20.70:FF:000016">
    <property type="entry name" value="Triosephosphate isomerase"/>
    <property type="match status" value="1"/>
</dbReference>
<dbReference type="Gene3D" id="3.20.20.70">
    <property type="entry name" value="Aldolase class I"/>
    <property type="match status" value="1"/>
</dbReference>
<dbReference type="HAMAP" id="MF_00147_B">
    <property type="entry name" value="TIM_B"/>
    <property type="match status" value="1"/>
</dbReference>
<dbReference type="InterPro" id="IPR013785">
    <property type="entry name" value="Aldolase_TIM"/>
</dbReference>
<dbReference type="InterPro" id="IPR035990">
    <property type="entry name" value="TIM_sf"/>
</dbReference>
<dbReference type="InterPro" id="IPR022896">
    <property type="entry name" value="TrioseP_Isoase_bac/euk"/>
</dbReference>
<dbReference type="InterPro" id="IPR000652">
    <property type="entry name" value="Triosephosphate_isomerase"/>
</dbReference>
<dbReference type="InterPro" id="IPR020861">
    <property type="entry name" value="Triosephosphate_isomerase_AS"/>
</dbReference>
<dbReference type="NCBIfam" id="TIGR00419">
    <property type="entry name" value="tim"/>
    <property type="match status" value="1"/>
</dbReference>
<dbReference type="PANTHER" id="PTHR21139">
    <property type="entry name" value="TRIOSEPHOSPHATE ISOMERASE"/>
    <property type="match status" value="1"/>
</dbReference>
<dbReference type="PANTHER" id="PTHR21139:SF42">
    <property type="entry name" value="TRIOSEPHOSPHATE ISOMERASE"/>
    <property type="match status" value="1"/>
</dbReference>
<dbReference type="Pfam" id="PF00121">
    <property type="entry name" value="TIM"/>
    <property type="match status" value="1"/>
</dbReference>
<dbReference type="SUPFAM" id="SSF51351">
    <property type="entry name" value="Triosephosphate isomerase (TIM)"/>
    <property type="match status" value="1"/>
</dbReference>
<dbReference type="PROSITE" id="PS00171">
    <property type="entry name" value="TIM_1"/>
    <property type="match status" value="1"/>
</dbReference>
<dbReference type="PROSITE" id="PS51440">
    <property type="entry name" value="TIM_2"/>
    <property type="match status" value="1"/>
</dbReference>